<sequence>MTAPASAPRLAQARRIVIKIGSALLVDSANASLRLEWLQSVCADIADLRSRGAEVIVVSSGAISLARHRLGLTSRRLRLDEKQAMASVGQIGLAQGWSAALAGHDLVAAQLLLTPDDTENRERHLNARATLQTLLDLGCVPVINENDAIATGEIRFGDNDRLGARVAQMTGADCLVLLSDIDGLYTADPRQDPSARHIPVVEQMTDEIMAMGGEPPPGYSSGGMRTKLLAARIATRAGANMVIAAGQEHHPLRRLQNGGLCTWFMAQTDAGSARKRWIGGSLQPKGTLTIDAGARRALEESASLLPAGVTGLEGSFGRGDLVLIRDADGSIIGRGLIAYDSEESQKLIGHRSGEMEQLLGYRGRDALIHRDDLALDLP</sequence>
<reference key="1">
    <citation type="journal article" date="2005" name="Nat. Biotechnol.">
        <title>Complete genome sequence of the acetic acid bacterium Gluconobacter oxydans.</title>
        <authorList>
            <person name="Prust C."/>
            <person name="Hoffmeister M."/>
            <person name="Liesegang H."/>
            <person name="Wiezer A."/>
            <person name="Fricke W.F."/>
            <person name="Ehrenreich A."/>
            <person name="Gottschalk G."/>
            <person name="Deppenmeier U."/>
        </authorList>
    </citation>
    <scope>NUCLEOTIDE SEQUENCE [LARGE SCALE GENOMIC DNA]</scope>
    <source>
        <strain>621H</strain>
    </source>
</reference>
<name>PROB_GLUOX</name>
<organism>
    <name type="scientific">Gluconobacter oxydans (strain 621H)</name>
    <name type="common">Gluconobacter suboxydans</name>
    <dbReference type="NCBI Taxonomy" id="290633"/>
    <lineage>
        <taxon>Bacteria</taxon>
        <taxon>Pseudomonadati</taxon>
        <taxon>Pseudomonadota</taxon>
        <taxon>Alphaproteobacteria</taxon>
        <taxon>Acetobacterales</taxon>
        <taxon>Acetobacteraceae</taxon>
        <taxon>Gluconobacter</taxon>
    </lineage>
</organism>
<feature type="chain" id="PRO_0000109677" description="Glutamate 5-kinase">
    <location>
        <begin position="1"/>
        <end position="378"/>
    </location>
</feature>
<feature type="domain" description="PUA" evidence="1">
    <location>
        <begin position="285"/>
        <end position="362"/>
    </location>
</feature>
<feature type="binding site" evidence="1">
    <location>
        <position position="19"/>
    </location>
    <ligand>
        <name>ATP</name>
        <dbReference type="ChEBI" id="CHEBI:30616"/>
    </ligand>
</feature>
<feature type="binding site" evidence="1">
    <location>
        <position position="60"/>
    </location>
    <ligand>
        <name>substrate</name>
    </ligand>
</feature>
<feature type="binding site" evidence="1">
    <location>
        <position position="147"/>
    </location>
    <ligand>
        <name>substrate</name>
    </ligand>
</feature>
<feature type="binding site" evidence="1">
    <location>
        <position position="159"/>
    </location>
    <ligand>
        <name>substrate</name>
    </ligand>
</feature>
<feature type="binding site" evidence="1">
    <location>
        <begin position="179"/>
        <end position="180"/>
    </location>
    <ligand>
        <name>ATP</name>
        <dbReference type="ChEBI" id="CHEBI:30616"/>
    </ligand>
</feature>
<feature type="binding site" evidence="1">
    <location>
        <begin position="221"/>
        <end position="227"/>
    </location>
    <ligand>
        <name>ATP</name>
        <dbReference type="ChEBI" id="CHEBI:30616"/>
    </ligand>
</feature>
<dbReference type="EC" id="2.7.2.11" evidence="1"/>
<dbReference type="EMBL" id="CP000009">
    <property type="protein sequence ID" value="AAW59935.1"/>
    <property type="molecule type" value="Genomic_DNA"/>
</dbReference>
<dbReference type="RefSeq" id="WP_011251738.1">
    <property type="nucleotide sequence ID" value="NC_006677.1"/>
</dbReference>
<dbReference type="SMR" id="Q5FUL1"/>
<dbReference type="STRING" id="290633.GOX0142"/>
<dbReference type="KEGG" id="gox:GOX0142"/>
<dbReference type="eggNOG" id="COG0263">
    <property type="taxonomic scope" value="Bacteria"/>
</dbReference>
<dbReference type="HOGENOM" id="CLU_025400_2_0_5"/>
<dbReference type="UniPathway" id="UPA00098">
    <property type="reaction ID" value="UER00359"/>
</dbReference>
<dbReference type="Proteomes" id="UP000006375">
    <property type="component" value="Chromosome"/>
</dbReference>
<dbReference type="GO" id="GO:0005829">
    <property type="term" value="C:cytosol"/>
    <property type="evidence" value="ECO:0007669"/>
    <property type="project" value="TreeGrafter"/>
</dbReference>
<dbReference type="GO" id="GO:0005524">
    <property type="term" value="F:ATP binding"/>
    <property type="evidence" value="ECO:0007669"/>
    <property type="project" value="UniProtKB-KW"/>
</dbReference>
<dbReference type="GO" id="GO:0004349">
    <property type="term" value="F:glutamate 5-kinase activity"/>
    <property type="evidence" value="ECO:0007669"/>
    <property type="project" value="UniProtKB-UniRule"/>
</dbReference>
<dbReference type="GO" id="GO:0003723">
    <property type="term" value="F:RNA binding"/>
    <property type="evidence" value="ECO:0007669"/>
    <property type="project" value="InterPro"/>
</dbReference>
<dbReference type="GO" id="GO:0055129">
    <property type="term" value="P:L-proline biosynthetic process"/>
    <property type="evidence" value="ECO:0007669"/>
    <property type="project" value="UniProtKB-UniRule"/>
</dbReference>
<dbReference type="CDD" id="cd04242">
    <property type="entry name" value="AAK_G5K_ProB"/>
    <property type="match status" value="1"/>
</dbReference>
<dbReference type="CDD" id="cd21157">
    <property type="entry name" value="PUA_G5K"/>
    <property type="match status" value="1"/>
</dbReference>
<dbReference type="FunFam" id="3.40.1160.10:FF:000018">
    <property type="entry name" value="Glutamate 5-kinase"/>
    <property type="match status" value="1"/>
</dbReference>
<dbReference type="Gene3D" id="3.40.1160.10">
    <property type="entry name" value="Acetylglutamate kinase-like"/>
    <property type="match status" value="1"/>
</dbReference>
<dbReference type="Gene3D" id="2.30.130.10">
    <property type="entry name" value="PUA domain"/>
    <property type="match status" value="1"/>
</dbReference>
<dbReference type="HAMAP" id="MF_00456">
    <property type="entry name" value="ProB"/>
    <property type="match status" value="1"/>
</dbReference>
<dbReference type="InterPro" id="IPR036393">
    <property type="entry name" value="AceGlu_kinase-like_sf"/>
</dbReference>
<dbReference type="InterPro" id="IPR001048">
    <property type="entry name" value="Asp/Glu/Uridylate_kinase"/>
</dbReference>
<dbReference type="InterPro" id="IPR041739">
    <property type="entry name" value="G5K_ProB"/>
</dbReference>
<dbReference type="InterPro" id="IPR001057">
    <property type="entry name" value="Glu/AcGlu_kinase"/>
</dbReference>
<dbReference type="InterPro" id="IPR011529">
    <property type="entry name" value="Glu_5kinase"/>
</dbReference>
<dbReference type="InterPro" id="IPR005715">
    <property type="entry name" value="Glu_5kinase/COase_Synthase"/>
</dbReference>
<dbReference type="InterPro" id="IPR002478">
    <property type="entry name" value="PUA"/>
</dbReference>
<dbReference type="InterPro" id="IPR015947">
    <property type="entry name" value="PUA-like_sf"/>
</dbReference>
<dbReference type="InterPro" id="IPR036974">
    <property type="entry name" value="PUA_sf"/>
</dbReference>
<dbReference type="NCBIfam" id="TIGR01027">
    <property type="entry name" value="proB"/>
    <property type="match status" value="1"/>
</dbReference>
<dbReference type="PANTHER" id="PTHR43654">
    <property type="entry name" value="GLUTAMATE 5-KINASE"/>
    <property type="match status" value="1"/>
</dbReference>
<dbReference type="PANTHER" id="PTHR43654:SF1">
    <property type="entry name" value="ISOPENTENYL PHOSPHATE KINASE"/>
    <property type="match status" value="1"/>
</dbReference>
<dbReference type="Pfam" id="PF00696">
    <property type="entry name" value="AA_kinase"/>
    <property type="match status" value="1"/>
</dbReference>
<dbReference type="Pfam" id="PF01472">
    <property type="entry name" value="PUA"/>
    <property type="match status" value="1"/>
</dbReference>
<dbReference type="PIRSF" id="PIRSF000729">
    <property type="entry name" value="GK"/>
    <property type="match status" value="1"/>
</dbReference>
<dbReference type="PRINTS" id="PR00474">
    <property type="entry name" value="GLU5KINASE"/>
</dbReference>
<dbReference type="SMART" id="SM00359">
    <property type="entry name" value="PUA"/>
    <property type="match status" value="1"/>
</dbReference>
<dbReference type="SUPFAM" id="SSF53633">
    <property type="entry name" value="Carbamate kinase-like"/>
    <property type="match status" value="1"/>
</dbReference>
<dbReference type="SUPFAM" id="SSF88697">
    <property type="entry name" value="PUA domain-like"/>
    <property type="match status" value="1"/>
</dbReference>
<dbReference type="PROSITE" id="PS50890">
    <property type="entry name" value="PUA"/>
    <property type="match status" value="1"/>
</dbReference>
<keyword id="KW-0028">Amino-acid biosynthesis</keyword>
<keyword id="KW-0067">ATP-binding</keyword>
<keyword id="KW-0963">Cytoplasm</keyword>
<keyword id="KW-0418">Kinase</keyword>
<keyword id="KW-0547">Nucleotide-binding</keyword>
<keyword id="KW-0641">Proline biosynthesis</keyword>
<keyword id="KW-1185">Reference proteome</keyword>
<keyword id="KW-0808">Transferase</keyword>
<protein>
    <recommendedName>
        <fullName evidence="1">Glutamate 5-kinase</fullName>
        <ecNumber evidence="1">2.7.2.11</ecNumber>
    </recommendedName>
    <alternativeName>
        <fullName evidence="1">Gamma-glutamyl kinase</fullName>
        <shortName evidence="1">GK</shortName>
    </alternativeName>
</protein>
<proteinExistence type="inferred from homology"/>
<evidence type="ECO:0000255" key="1">
    <source>
        <dbReference type="HAMAP-Rule" id="MF_00456"/>
    </source>
</evidence>
<gene>
    <name evidence="1" type="primary">proB</name>
    <name type="ordered locus">GOX0142</name>
</gene>
<comment type="function">
    <text evidence="1">Catalyzes the transfer of a phosphate group to glutamate to form L-glutamate 5-phosphate.</text>
</comment>
<comment type="catalytic activity">
    <reaction evidence="1">
        <text>L-glutamate + ATP = L-glutamyl 5-phosphate + ADP</text>
        <dbReference type="Rhea" id="RHEA:14877"/>
        <dbReference type="ChEBI" id="CHEBI:29985"/>
        <dbReference type="ChEBI" id="CHEBI:30616"/>
        <dbReference type="ChEBI" id="CHEBI:58274"/>
        <dbReference type="ChEBI" id="CHEBI:456216"/>
        <dbReference type="EC" id="2.7.2.11"/>
    </reaction>
</comment>
<comment type="pathway">
    <text evidence="1">Amino-acid biosynthesis; L-proline biosynthesis; L-glutamate 5-semialdehyde from L-glutamate: step 1/2.</text>
</comment>
<comment type="subcellular location">
    <subcellularLocation>
        <location evidence="1">Cytoplasm</location>
    </subcellularLocation>
</comment>
<comment type="similarity">
    <text evidence="1">Belongs to the glutamate 5-kinase family.</text>
</comment>
<accession>Q5FUL1</accession>